<evidence type="ECO:0000250" key="1"/>
<evidence type="ECO:0000255" key="2"/>
<evidence type="ECO:0000303" key="3">
    <source>
    </source>
</evidence>
<evidence type="ECO:0000305" key="4"/>
<proteinExistence type="evidence at transcript level"/>
<accession>P68426</accession>
<reference key="1">
    <citation type="journal article" date="2004" name="Acta Biochim. Biophys. Sin.">
        <title>The cDNA and genomic DNA organization of a novel toxin SHT-I from spider Ornithoctonus huwena.</title>
        <authorList>
            <person name="Qiao P."/>
            <person name="Zuo X.-P."/>
            <person name="Chai Z.-F."/>
            <person name="Ji Y.-H."/>
        </authorList>
    </citation>
    <scope>NUCLEOTIDE SEQUENCE [MRNA]</scope>
    <source>
        <tissue>Venom gland</tissue>
    </source>
</reference>
<feature type="signal peptide" evidence="2">
    <location>
        <begin position="1"/>
        <end position="21"/>
    </location>
</feature>
<feature type="propeptide" id="PRO_0000035570" evidence="1">
    <location>
        <begin position="22"/>
        <end position="48"/>
    </location>
</feature>
<feature type="chain" id="PRO_0000035571" description="U6-theraphotoxin-Hs1a">
    <location>
        <begin position="49"/>
        <end position="81"/>
    </location>
</feature>
<feature type="disulfide bond" evidence="1">
    <location>
        <begin position="50"/>
        <end position="65"/>
    </location>
</feature>
<feature type="disulfide bond" evidence="1">
    <location>
        <begin position="57"/>
        <end position="70"/>
    </location>
</feature>
<keyword id="KW-1015">Disulfide bond</keyword>
<keyword id="KW-0960">Knottin</keyword>
<keyword id="KW-0528">Neurotoxin</keyword>
<keyword id="KW-0629">Postsynaptic neurotoxin</keyword>
<keyword id="KW-0964">Secreted</keyword>
<keyword id="KW-0732">Signal</keyword>
<keyword id="KW-0800">Toxin</keyword>
<comment type="function">
    <text evidence="1">Binds to the nicotinic acetylcholine receptor. Blocks neuromuscular transmission.</text>
</comment>
<comment type="subcellular location">
    <subcellularLocation>
        <location evidence="1">Secreted</location>
    </subcellularLocation>
</comment>
<comment type="tissue specificity">
    <text>Expressed by the venom gland.</text>
</comment>
<comment type="domain">
    <text evidence="1">The presence of a 'disulfide through disulfide knot' structurally defines this protein as a knottin.</text>
</comment>
<comment type="similarity">
    <text evidence="4">Belongs to the neurotoxin 10 (Hwtx-1) family. 51 (Hntx-8) subfamily.</text>
</comment>
<comment type="caution">
    <text evidence="4">While it is structurally defined as a knottin it lacks the conserved Cys residue in position 77.</text>
</comment>
<protein>
    <recommendedName>
        <fullName>U6-theraphotoxin-Hs1a</fullName>
        <shortName>U6-TRTX-Hs1a</shortName>
    </recommendedName>
    <alternativeName>
        <fullName evidence="3">SHT-I</fullName>
    </alternativeName>
    <alternativeName>
        <fullName>Toxin 1</fullName>
    </alternativeName>
    <alternativeName>
        <fullName>Toxin-I</fullName>
    </alternativeName>
</protein>
<sequence>MKASMFLALAGLVLLFVVCYASESEEKEFPRELLSTIFAVDDFKGEERECLGIFKACTPGKNECCSNRVCSGKTRWSKWKL</sequence>
<name>TXT1_CYRSC</name>
<dbReference type="SMR" id="P68426"/>
<dbReference type="ArachnoServer" id="AS000418">
    <property type="toxin name" value="U6-theraphotoxin-Hs1a"/>
</dbReference>
<dbReference type="GO" id="GO:0005576">
    <property type="term" value="C:extracellular region"/>
    <property type="evidence" value="ECO:0007669"/>
    <property type="project" value="UniProtKB-SubCell"/>
</dbReference>
<dbReference type="GO" id="GO:0035792">
    <property type="term" value="C:host cell postsynaptic membrane"/>
    <property type="evidence" value="ECO:0007669"/>
    <property type="project" value="UniProtKB-KW"/>
</dbReference>
<dbReference type="GO" id="GO:0008200">
    <property type="term" value="F:ion channel inhibitor activity"/>
    <property type="evidence" value="ECO:0007669"/>
    <property type="project" value="InterPro"/>
</dbReference>
<dbReference type="GO" id="GO:0090729">
    <property type="term" value="F:toxin activity"/>
    <property type="evidence" value="ECO:0007669"/>
    <property type="project" value="UniProtKB-KW"/>
</dbReference>
<dbReference type="InterPro" id="IPR011696">
    <property type="entry name" value="Huwentoxin-1"/>
</dbReference>
<dbReference type="Pfam" id="PF07740">
    <property type="entry name" value="Toxin_12"/>
    <property type="match status" value="1"/>
</dbReference>
<dbReference type="SUPFAM" id="SSF57059">
    <property type="entry name" value="omega toxin-like"/>
    <property type="match status" value="1"/>
</dbReference>
<organism>
    <name type="scientific">Cyriopagopus schmidti</name>
    <name type="common">Chinese bird spider</name>
    <name type="synonym">Haplopelma schmidti</name>
    <dbReference type="NCBI Taxonomy" id="29017"/>
    <lineage>
        <taxon>Eukaryota</taxon>
        <taxon>Metazoa</taxon>
        <taxon>Ecdysozoa</taxon>
        <taxon>Arthropoda</taxon>
        <taxon>Chelicerata</taxon>
        <taxon>Arachnida</taxon>
        <taxon>Araneae</taxon>
        <taxon>Mygalomorphae</taxon>
        <taxon>Theraphosidae</taxon>
        <taxon>Cyriopagopus</taxon>
    </lineage>
</organism>